<accession>P68756</accession>
<accession>Q07922</accession>
<dbReference type="GlyCosmos" id="P68756">
    <property type="glycosylation" value="6 sites, No reported glycans"/>
</dbReference>
<dbReference type="GO" id="GO:0020002">
    <property type="term" value="C:host cell plasma membrane"/>
    <property type="evidence" value="ECO:0007669"/>
    <property type="project" value="UniProtKB-SubCell"/>
</dbReference>
<dbReference type="GO" id="GO:0016020">
    <property type="term" value="C:membrane"/>
    <property type="evidence" value="ECO:0007669"/>
    <property type="project" value="UniProtKB-KW"/>
</dbReference>
<dbReference type="GO" id="GO:0019031">
    <property type="term" value="C:viral envelope"/>
    <property type="evidence" value="ECO:0007669"/>
    <property type="project" value="UniProtKB-KW"/>
</dbReference>
<dbReference type="GO" id="GO:0055036">
    <property type="term" value="C:virion membrane"/>
    <property type="evidence" value="ECO:0007669"/>
    <property type="project" value="UniProtKB-SubCell"/>
</dbReference>
<dbReference type="GO" id="GO:0046789">
    <property type="term" value="F:host cell surface receptor binding"/>
    <property type="evidence" value="ECO:0007669"/>
    <property type="project" value="InterPro"/>
</dbReference>
<dbReference type="GO" id="GO:0039654">
    <property type="term" value="P:fusion of virus membrane with host endosome membrane"/>
    <property type="evidence" value="ECO:0007669"/>
    <property type="project" value="UniProtKB-KW"/>
</dbReference>
<dbReference type="GO" id="GO:0019064">
    <property type="term" value="P:fusion of virus membrane with host plasma membrane"/>
    <property type="evidence" value="ECO:0007669"/>
    <property type="project" value="InterPro"/>
</dbReference>
<dbReference type="GO" id="GO:0046718">
    <property type="term" value="P:symbiont entry into host cell"/>
    <property type="evidence" value="ECO:0007669"/>
    <property type="project" value="UniProtKB-KW"/>
</dbReference>
<dbReference type="GO" id="GO:0019062">
    <property type="term" value="P:virion attachment to host cell"/>
    <property type="evidence" value="ECO:0007669"/>
    <property type="project" value="UniProtKB-KW"/>
</dbReference>
<dbReference type="Gene3D" id="3.90.209.20">
    <property type="match status" value="1"/>
</dbReference>
<dbReference type="Gene3D" id="2.10.77.10">
    <property type="entry name" value="Hemagglutinin Chain A, Domain 2"/>
    <property type="match status" value="1"/>
</dbReference>
<dbReference type="InterPro" id="IPR008980">
    <property type="entry name" value="Capsid_hemagglutn"/>
</dbReference>
<dbReference type="InterPro" id="IPR013828">
    <property type="entry name" value="Hemagglutn_HA1_a/b_dom_sf"/>
</dbReference>
<dbReference type="InterPro" id="IPR001364">
    <property type="entry name" value="Hemagglutn_influenz_A/B"/>
</dbReference>
<dbReference type="Pfam" id="PF00509">
    <property type="entry name" value="Hemagglutinin"/>
    <property type="match status" value="1"/>
</dbReference>
<dbReference type="SUPFAM" id="SSF49818">
    <property type="entry name" value="Viral protein domain"/>
    <property type="match status" value="1"/>
</dbReference>
<comment type="function">
    <text>Binds to sialic acid-containing receptors on the cell surface, bringing about the attachment of the virus particle to the cell. Plays a major role in the determination of host range restriction and virulence. Class I viral fusion protein. Responsible for penetration of the virus into the cell cytoplasm by mediating the fusion of the membrane of the endocytosed virus particle with the endosomal membrane. Low pH in endosomes induce an irreversible conformational change in HA2, releasing the fusion hydrophobic peptide. Several trimers are required to form a competent fusion pore.</text>
</comment>
<comment type="subunit">
    <text>Homotrimer of disulfide-linked HA1-HA2.</text>
</comment>
<comment type="subcellular location">
    <subcellularLocation>
        <location evidence="3">Virion membrane</location>
        <topology evidence="3">Single-pass type I membrane protein</topology>
    </subcellularLocation>
    <subcellularLocation>
        <location>Host apical cell membrane</location>
        <topology>Single-pass type I membrane protein</topology>
    </subcellularLocation>
    <text>Targeted to the apical plasma membrane in epithelial polarized cells through a signal present in the transmembrane domain. Associated with glycosphingolipid- and cholesterol-enriched detergent-resistant lipid rafts.</text>
</comment>
<comment type="PTM">
    <text evidence="1">In natural infection, inactive HA is matured into HA1 and HA2 outside the cell by one or more trypsin-like, arginine-specific endoprotease secreted by the bronchial epithelial cells. One identified protease that may be involved in this process is secreted in lungs by club cells (By similarity).</text>
</comment>
<comment type="PTM">
    <text evidence="1">Palmitoylated.</text>
</comment>
<comment type="miscellaneous">
    <text>Major glycoprotein, comprises over 80% of the envelope proteins present in virus particle.</text>
</comment>
<comment type="miscellaneous">
    <text>The extent of infection into host organism is determined by HA. Influenza viruses bud from the apical surface of polarized epithelial cells (e.g. bronchial epithelial cells) into lumen of lungs and are therefore usually pneumotropic. The reason is that HA is cleaved by tryptase clara which is restricted to lungs. However, HAs of H5 and H7 pantropic avian viruses subtypes can be cleaved by furin and subtilisin-type enzymes, allowing the virus to grow in other organs than lungs.</text>
</comment>
<comment type="miscellaneous">
    <text>The influenza B genome consist of 8 RNA segments. Genetic variation of hemagglutinin and/or neuraminidase genes results in the emergence of new influenza strains. The mechanism of variation can be the result of point mutations or the result of genetic reassortment between segments of two different strains.</text>
</comment>
<comment type="similarity">
    <text evidence="3">Belongs to the influenza viruses hemagglutinin family.</text>
</comment>
<protein>
    <recommendedName>
        <fullName>Hemagglutinin</fullName>
    </recommendedName>
    <component>
        <recommendedName>
            <fullName>Hemagglutinin HA1 chain</fullName>
        </recommendedName>
    </component>
</protein>
<organismHost>
    <name type="scientific">Homo sapiens</name>
    <name type="common">Human</name>
    <dbReference type="NCBI Taxonomy" id="9606"/>
</organismHost>
<reference key="1">
    <citation type="journal article" date="1992" name="J. Gen. Virol.">
        <title>Evolution of influenza B/Victoria/2/87-like viruses: occurrence of a genetically conserved virus under conditions of low epidemic activity.</title>
        <authorList>
            <person name="Kinnunen L."/>
            <person name="Ikonen N."/>
            <person name="Poeyry T."/>
            <person name="Pyhaelae R."/>
        </authorList>
    </citation>
    <scope>NUCLEOTIDE SEQUENCE</scope>
</reference>
<organism>
    <name type="scientific">Influenza B virus (strain B/Finland/146/1990)</name>
    <dbReference type="NCBI Taxonomy" id="38990"/>
    <lineage>
        <taxon>Viruses</taxon>
        <taxon>Riboviria</taxon>
        <taxon>Orthornavirae</taxon>
        <taxon>Negarnaviricota</taxon>
        <taxon>Polyploviricotina</taxon>
        <taxon>Insthoviricetes</taxon>
        <taxon>Articulavirales</taxon>
        <taxon>Orthomyxoviridae</taxon>
        <taxon>Betainfluenzavirus</taxon>
        <taxon>Betainfluenzavirus influenzae</taxon>
        <taxon>Influenza B virus</taxon>
    </lineage>
</organism>
<sequence>DRICTGITSSNSPHVVKTATQGEVNVTGVIPLTTTPTKSHFANLKGTKTRGKLCPKCLNCTDLDVALGRPKCMGTIPSAKASILHEVKPVTSGCFPIMHDRTKXRQLPNLLRGYENIRLSTHNVINAETAPGGPYKIGTSGSCPNITNGNGFFATMAWAVPKNDNNKTATNPLTVEVPYICTEGEDQITVWGFHSDNETQMVKLYGDSKPQKFTSSANGVTAHYVSQIGGFPNQAEDGGLPQSGRIVVDYMVQKSGKTGTITYQRGILLPQKVWCASGRSKVIKGSLPLIGEADCLHEKYGGLNKSKPYYTGEHAKAIGNCPIWVKTPLKLANGTKYRPPAKLLKER</sequence>
<keyword id="KW-1015">Disulfide bond</keyword>
<keyword id="KW-1170">Fusion of virus membrane with host endosomal membrane</keyword>
<keyword id="KW-1168">Fusion of virus membrane with host membrane</keyword>
<keyword id="KW-0325">Glycoprotein</keyword>
<keyword id="KW-0348">Hemagglutinin</keyword>
<keyword id="KW-1032">Host cell membrane</keyword>
<keyword id="KW-1043">Host membrane</keyword>
<keyword id="KW-0945">Host-virus interaction</keyword>
<keyword id="KW-0449">Lipoprotein</keyword>
<keyword id="KW-0472">Membrane</keyword>
<keyword id="KW-0564">Palmitate</keyword>
<keyword id="KW-0812">Transmembrane</keyword>
<keyword id="KW-1161">Viral attachment to host cell</keyword>
<keyword id="KW-0261">Viral envelope protein</keyword>
<keyword id="KW-1162">Viral penetration into host cytoplasm</keyword>
<keyword id="KW-0946">Virion</keyword>
<keyword id="KW-1160">Virus entry into host cell</keyword>
<name>HEMA_INBF4</name>
<gene>
    <name type="primary">HA</name>
</gene>
<evidence type="ECO:0000250" key="1"/>
<evidence type="ECO:0000255" key="2"/>
<evidence type="ECO:0000305" key="3"/>
<proteinExistence type="inferred from homology"/>
<feature type="chain" id="PRO_0000039096" description="Hemagglutinin HA1 chain">
    <location>
        <begin position="1"/>
        <end position="346"/>
    </location>
</feature>
<feature type="glycosylation site" description="N-linked (GlcNAc...) asparagine; by host" evidence="2">
    <location>
        <position position="25"/>
    </location>
</feature>
<feature type="glycosylation site" description="N-linked (GlcNAc...) asparagine; by host" evidence="2">
    <location>
        <position position="59"/>
    </location>
</feature>
<feature type="glycosylation site" description="N-linked (GlcNAc...) asparagine; by host" evidence="2">
    <location>
        <position position="145"/>
    </location>
</feature>
<feature type="glycosylation site" description="N-linked (GlcNAc...) asparagine; by host" evidence="2">
    <location>
        <position position="166"/>
    </location>
</feature>
<feature type="glycosylation site" description="N-linked (GlcNAc...) asparagine; by host" evidence="2">
    <location>
        <position position="304"/>
    </location>
</feature>
<feature type="glycosylation site" description="N-linked (GlcNAc...) asparagine; by host" evidence="2">
    <location>
        <position position="333"/>
    </location>
</feature>
<feature type="non-terminal residue">
    <location>
        <position position="1"/>
    </location>
</feature>
<feature type="non-terminal residue">
    <location>
        <position position="347"/>
    </location>
</feature>